<protein>
    <recommendedName>
        <fullName evidence="2">Beta-(1--&gt;2)glucan export ATP-binding/permease protein NdvA</fullName>
        <ecNumber evidence="2">7.5.2.3</ecNumber>
    </recommendedName>
</protein>
<gene>
    <name evidence="2" type="primary">ndvA</name>
    <name type="ordered locus">BH10210</name>
</gene>
<keyword id="KW-0067">ATP-binding</keyword>
<keyword id="KW-0997">Cell inner membrane</keyword>
<keyword id="KW-1003">Cell membrane</keyword>
<keyword id="KW-0472">Membrane</keyword>
<keyword id="KW-0547">Nucleotide-binding</keyword>
<keyword id="KW-0762">Sugar transport</keyword>
<keyword id="KW-1278">Translocase</keyword>
<keyword id="KW-0812">Transmembrane</keyword>
<keyword id="KW-1133">Transmembrane helix</keyword>
<keyword id="KW-0813">Transport</keyword>
<accession>Q6G2Z5</accession>
<proteinExistence type="inferred from homology"/>
<sequence>MSLFRTYARVLTYLNKEKNASLLICSANVMLAIITIAEPILFGHVIDSIAEKSAIIPTLTIWVCFGISHILAYVLIARGADRLVHRRRLAVLTESFERIIAMPLIWHQQRGTSNALHILLRAVDSMATIWLDFMRQHLSTLVALFVLIPIAFNMNWRLSIVLVVLAIIYVLIARLVMRKTKDGQAAVECYHHNLFQHVSDSISNVSIVQSYNRIKEETSILHQHTNDLLKAQNPVLNWWALASGLNRMASTISIVCVLLLGAFFVAKGQLRVGEVVSFVGFAQLMISRLDQMSNFINLTISSQAKLQEFFAMEDSTFQSKEPENLPSLQNVKGAIQFHHVTYKFPNSSQGIFDISFEVKTGQTVAIVGPTGAGKTTLINLLQRIYDPTLGHISIDGINIRSVNRESLRKSLATVFQDAGLFNRTIHDNISIGRTTATNEELYEAAKIAAAHDFILKKTDRYNTMIGEQGSQLSGGEKQRLAIARAVLKNAPILILDEATSALDVETEARVKDALDCISHNRTTFIIAHRLSTVRNADLVLFLEQGHLIEKGSFQELIAKGGRFYKLLKAGSLAINQPTIETKDENVIPLHEAIAS</sequence>
<name>NDVA_BARHE</name>
<reference key="1">
    <citation type="journal article" date="2004" name="Proc. Natl. Acad. Sci. U.S.A.">
        <title>The louse-borne human pathogen Bartonella quintana is a genomic derivative of the zoonotic agent Bartonella henselae.</title>
        <authorList>
            <person name="Alsmark U.C.M."/>
            <person name="Frank A.C."/>
            <person name="Karlberg E.O."/>
            <person name="Legault B.-A."/>
            <person name="Ardell D.H."/>
            <person name="Canbaeck B."/>
            <person name="Eriksson A.-S."/>
            <person name="Naeslund A.K."/>
            <person name="Handley S.A."/>
            <person name="Huvet M."/>
            <person name="La Scola B."/>
            <person name="Holmberg M."/>
            <person name="Andersson S.G.E."/>
        </authorList>
    </citation>
    <scope>NUCLEOTIDE SEQUENCE [LARGE SCALE GENOMIC DNA]</scope>
    <source>
        <strain>ATCC 49882 / DSM 28221 / CCUG 30454 / Houston 1</strain>
    </source>
</reference>
<comment type="function">
    <text evidence="1">Involved in beta-(1--&gt;2)glucan export. Transmembrane domains (TMD) form a pore in the inner membrane and the ATP-binding domain (NBD) is responsible for energy generation (By similarity).</text>
</comment>
<comment type="catalytic activity">
    <reaction evidence="2">
        <text>[(1-&gt;2)-beta-D-glucosyl](n)(in) + ATP + H2O = [(1-&gt;2)-beta-D-glucosyl](n)(out) + ADP + phosphate + H(+)</text>
        <dbReference type="Rhea" id="RHEA:18453"/>
        <dbReference type="Rhea" id="RHEA-COMP:11881"/>
        <dbReference type="ChEBI" id="CHEBI:15377"/>
        <dbReference type="ChEBI" id="CHEBI:15378"/>
        <dbReference type="ChEBI" id="CHEBI:27517"/>
        <dbReference type="ChEBI" id="CHEBI:30616"/>
        <dbReference type="ChEBI" id="CHEBI:43474"/>
        <dbReference type="ChEBI" id="CHEBI:456216"/>
        <dbReference type="EC" id="7.5.2.3"/>
    </reaction>
</comment>
<comment type="subunit">
    <text evidence="2">Homodimer.</text>
</comment>
<comment type="subcellular location">
    <subcellularLocation>
        <location evidence="2">Cell inner membrane</location>
        <topology evidence="2">Multi-pass membrane protein</topology>
    </subcellularLocation>
</comment>
<comment type="domain">
    <text>In NdvA the ATP-binding domain (NBD) and the transmembrane domain (TMD) are fused.</text>
</comment>
<comment type="similarity">
    <text evidence="2">Belongs to the ABC transporter superfamily. Beta-(1--&gt;2)glucan exporter (TC 3.A.1.108.1) family.</text>
</comment>
<evidence type="ECO:0000250" key="1"/>
<evidence type="ECO:0000255" key="2">
    <source>
        <dbReference type="HAMAP-Rule" id="MF_01728"/>
    </source>
</evidence>
<feature type="chain" id="PRO_0000290241" description="Beta-(1--&gt;2)glucan export ATP-binding/permease protein NdvA">
    <location>
        <begin position="1"/>
        <end position="595"/>
    </location>
</feature>
<feature type="transmembrane region" description="Helical" evidence="2">
    <location>
        <begin position="22"/>
        <end position="42"/>
    </location>
</feature>
<feature type="transmembrane region" description="Helical" evidence="2">
    <location>
        <begin position="55"/>
        <end position="75"/>
    </location>
</feature>
<feature type="transmembrane region" description="Helical" evidence="2">
    <location>
        <begin position="129"/>
        <end position="149"/>
    </location>
</feature>
<feature type="transmembrane region" description="Helical" evidence="2">
    <location>
        <begin position="152"/>
        <end position="172"/>
    </location>
</feature>
<feature type="transmembrane region" description="Helical" evidence="2">
    <location>
        <begin position="248"/>
        <end position="268"/>
    </location>
</feature>
<feature type="domain" description="ABC transmembrane type-1" evidence="2">
    <location>
        <begin position="21"/>
        <end position="301"/>
    </location>
</feature>
<feature type="domain" description="ABC transporter" evidence="2">
    <location>
        <begin position="335"/>
        <end position="569"/>
    </location>
</feature>
<feature type="binding site" evidence="2">
    <location>
        <begin position="368"/>
        <end position="375"/>
    </location>
    <ligand>
        <name>ATP</name>
        <dbReference type="ChEBI" id="CHEBI:30616"/>
    </ligand>
</feature>
<organism>
    <name type="scientific">Bartonella henselae (strain ATCC 49882 / DSM 28221 / CCUG 30454 / Houston 1)</name>
    <name type="common">Rochalimaea henselae</name>
    <dbReference type="NCBI Taxonomy" id="283166"/>
    <lineage>
        <taxon>Bacteria</taxon>
        <taxon>Pseudomonadati</taxon>
        <taxon>Pseudomonadota</taxon>
        <taxon>Alphaproteobacteria</taxon>
        <taxon>Hyphomicrobiales</taxon>
        <taxon>Bartonellaceae</taxon>
        <taxon>Bartonella</taxon>
    </lineage>
</organism>
<dbReference type="EC" id="7.5.2.3" evidence="2"/>
<dbReference type="EMBL" id="BX897699">
    <property type="protein sequence ID" value="CAF27812.1"/>
    <property type="molecule type" value="Genomic_DNA"/>
</dbReference>
<dbReference type="SMR" id="Q6G2Z5"/>
<dbReference type="PaxDb" id="283166-BH10210"/>
<dbReference type="EnsemblBacteria" id="CAF27812">
    <property type="protein sequence ID" value="CAF27812"/>
    <property type="gene ID" value="BH10210"/>
</dbReference>
<dbReference type="KEGG" id="bhe:BH10210"/>
<dbReference type="eggNOG" id="COG1132">
    <property type="taxonomic scope" value="Bacteria"/>
</dbReference>
<dbReference type="OrthoDB" id="9804259at2"/>
<dbReference type="Proteomes" id="UP000000421">
    <property type="component" value="Chromosome"/>
</dbReference>
<dbReference type="GO" id="GO:0005886">
    <property type="term" value="C:plasma membrane"/>
    <property type="evidence" value="ECO:0007669"/>
    <property type="project" value="UniProtKB-SubCell"/>
</dbReference>
<dbReference type="GO" id="GO:0015441">
    <property type="term" value="F:ABC-type beta-glucan transporter activity"/>
    <property type="evidence" value="ECO:0007669"/>
    <property type="project" value="UniProtKB-EC"/>
</dbReference>
<dbReference type="GO" id="GO:0015421">
    <property type="term" value="F:ABC-type oligopeptide transporter activity"/>
    <property type="evidence" value="ECO:0007669"/>
    <property type="project" value="TreeGrafter"/>
</dbReference>
<dbReference type="GO" id="GO:0005524">
    <property type="term" value="F:ATP binding"/>
    <property type="evidence" value="ECO:0007669"/>
    <property type="project" value="UniProtKB-KW"/>
</dbReference>
<dbReference type="GO" id="GO:0016887">
    <property type="term" value="F:ATP hydrolysis activity"/>
    <property type="evidence" value="ECO:0007669"/>
    <property type="project" value="InterPro"/>
</dbReference>
<dbReference type="CDD" id="cd18562">
    <property type="entry name" value="ABC_6TM_NdvA_beta-glucan_exporter_like"/>
    <property type="match status" value="1"/>
</dbReference>
<dbReference type="FunFam" id="3.40.50.300:FF:000221">
    <property type="entry name" value="Multidrug ABC transporter ATP-binding protein"/>
    <property type="match status" value="1"/>
</dbReference>
<dbReference type="Gene3D" id="1.20.1560.10">
    <property type="entry name" value="ABC transporter type 1, transmembrane domain"/>
    <property type="match status" value="1"/>
</dbReference>
<dbReference type="Gene3D" id="3.40.50.300">
    <property type="entry name" value="P-loop containing nucleotide triphosphate hydrolases"/>
    <property type="match status" value="1"/>
</dbReference>
<dbReference type="InterPro" id="IPR003593">
    <property type="entry name" value="AAA+_ATPase"/>
</dbReference>
<dbReference type="InterPro" id="IPR011527">
    <property type="entry name" value="ABC1_TM_dom"/>
</dbReference>
<dbReference type="InterPro" id="IPR036640">
    <property type="entry name" value="ABC1_TM_sf"/>
</dbReference>
<dbReference type="InterPro" id="IPR003439">
    <property type="entry name" value="ABC_transporter-like_ATP-bd"/>
</dbReference>
<dbReference type="InterPro" id="IPR017871">
    <property type="entry name" value="ABC_transporter-like_CS"/>
</dbReference>
<dbReference type="InterPro" id="IPR005896">
    <property type="entry name" value="NdvA"/>
</dbReference>
<dbReference type="InterPro" id="IPR027417">
    <property type="entry name" value="P-loop_NTPase"/>
</dbReference>
<dbReference type="InterPro" id="IPR039421">
    <property type="entry name" value="Type_1_exporter"/>
</dbReference>
<dbReference type="NCBIfam" id="TIGR01192">
    <property type="entry name" value="chvA"/>
    <property type="match status" value="1"/>
</dbReference>
<dbReference type="NCBIfam" id="NF010178">
    <property type="entry name" value="PRK13657.1"/>
    <property type="match status" value="1"/>
</dbReference>
<dbReference type="PANTHER" id="PTHR43394:SF1">
    <property type="entry name" value="ATP-BINDING CASSETTE SUB-FAMILY B MEMBER 10, MITOCHONDRIAL"/>
    <property type="match status" value="1"/>
</dbReference>
<dbReference type="PANTHER" id="PTHR43394">
    <property type="entry name" value="ATP-DEPENDENT PERMEASE MDL1, MITOCHONDRIAL"/>
    <property type="match status" value="1"/>
</dbReference>
<dbReference type="Pfam" id="PF00664">
    <property type="entry name" value="ABC_membrane"/>
    <property type="match status" value="1"/>
</dbReference>
<dbReference type="Pfam" id="PF00005">
    <property type="entry name" value="ABC_tran"/>
    <property type="match status" value="1"/>
</dbReference>
<dbReference type="SMART" id="SM00382">
    <property type="entry name" value="AAA"/>
    <property type="match status" value="1"/>
</dbReference>
<dbReference type="SUPFAM" id="SSF90123">
    <property type="entry name" value="ABC transporter transmembrane region"/>
    <property type="match status" value="1"/>
</dbReference>
<dbReference type="SUPFAM" id="SSF52540">
    <property type="entry name" value="P-loop containing nucleoside triphosphate hydrolases"/>
    <property type="match status" value="1"/>
</dbReference>
<dbReference type="PROSITE" id="PS50929">
    <property type="entry name" value="ABC_TM1F"/>
    <property type="match status" value="1"/>
</dbReference>
<dbReference type="PROSITE" id="PS00211">
    <property type="entry name" value="ABC_TRANSPORTER_1"/>
    <property type="match status" value="1"/>
</dbReference>
<dbReference type="PROSITE" id="PS50893">
    <property type="entry name" value="ABC_TRANSPORTER_2"/>
    <property type="match status" value="1"/>
</dbReference>
<dbReference type="PROSITE" id="PS51317">
    <property type="entry name" value="NDVA"/>
    <property type="match status" value="1"/>
</dbReference>